<sequence>MLLRGFSELLKCRGVMMKMRMKMSGDSSSLTLTEQQGGIRRIILNNPRKRNALSLQMLESLRENILTDADNPELHVIIISAVGPVFSSGHDLQELSSAEGSDLPRRVFHSCSELMMLIQDLPVPVIAMVNGVATAAGCQLVASCDVAVASEKSTFATPGVNVGLFCSTPAVAIGRTVPRKIAMQMLLTGRPLSAQQALQHGLLSAVFSEERLEDETLAIARRVCESSRPVVSLGKQIFNTQMSQSRDAAYSTAGAAMLDNLRLRDGQEGIRAFLEKRKPVWSNTDDCIH</sequence>
<keyword id="KW-0276">Fatty acid metabolism</keyword>
<keyword id="KW-0443">Lipid metabolism</keyword>
<keyword id="KW-0496">Mitochondrion</keyword>
<keyword id="KW-1185">Reference proteome</keyword>
<keyword id="KW-0809">Transit peptide</keyword>
<reference key="1">
    <citation type="submission" date="2006-11" db="EMBL/GenBank/DDBJ databases">
        <authorList>
            <consortium name="NIH - Zebrafish Gene Collection (ZGC) project"/>
        </authorList>
    </citation>
    <scope>NUCLEOTIDE SEQUENCE [LARGE SCALE MRNA]</scope>
    <source>
        <tissue>Embryo</tissue>
    </source>
</reference>
<proteinExistence type="evidence at transcript level"/>
<organism>
    <name type="scientific">Danio rerio</name>
    <name type="common">Zebrafish</name>
    <name type="synonym">Brachydanio rerio</name>
    <dbReference type="NCBI Taxonomy" id="7955"/>
    <lineage>
        <taxon>Eukaryota</taxon>
        <taxon>Metazoa</taxon>
        <taxon>Chordata</taxon>
        <taxon>Craniata</taxon>
        <taxon>Vertebrata</taxon>
        <taxon>Euteleostomi</taxon>
        <taxon>Actinopterygii</taxon>
        <taxon>Neopterygii</taxon>
        <taxon>Teleostei</taxon>
        <taxon>Ostariophysi</taxon>
        <taxon>Cypriniformes</taxon>
        <taxon>Danionidae</taxon>
        <taxon>Danioninae</taxon>
        <taxon>Danio</taxon>
    </lineage>
</organism>
<evidence type="ECO:0000250" key="1">
    <source>
        <dbReference type="UniProtKB" id="Q96DC8"/>
    </source>
</evidence>
<evidence type="ECO:0000255" key="2"/>
<evidence type="ECO:0000305" key="3"/>
<protein>
    <recommendedName>
        <fullName>Enoyl-CoA hydratase domain-containing protein 3, mitochondrial</fullName>
    </recommendedName>
</protein>
<gene>
    <name type="primary">echdc3</name>
    <name type="ORF">zgc:158321</name>
</gene>
<name>ECHD3_DANRE</name>
<dbReference type="EMBL" id="BC127583">
    <property type="protein sequence ID" value="AAI27584.1"/>
    <property type="status" value="ALT_INIT"/>
    <property type="molecule type" value="mRNA"/>
</dbReference>
<dbReference type="RefSeq" id="NP_001073131.1">
    <property type="nucleotide sequence ID" value="NM_001079663.1"/>
</dbReference>
<dbReference type="SMR" id="A0PJR5"/>
<dbReference type="FunCoup" id="A0PJR5">
    <property type="interactions" value="566"/>
</dbReference>
<dbReference type="STRING" id="7955.ENSDARP00000139091"/>
<dbReference type="PaxDb" id="7955-ENSDARP00000087743"/>
<dbReference type="PeptideAtlas" id="A0PJR5"/>
<dbReference type="GeneID" id="780842"/>
<dbReference type="KEGG" id="dre:780842"/>
<dbReference type="AGR" id="ZFIN:ZDB-GENE-061201-12"/>
<dbReference type="CTD" id="79746"/>
<dbReference type="ZFIN" id="ZDB-GENE-061201-12">
    <property type="gene designation" value="echdc3"/>
</dbReference>
<dbReference type="eggNOG" id="KOG1682">
    <property type="taxonomic scope" value="Eukaryota"/>
</dbReference>
<dbReference type="InParanoid" id="A0PJR5"/>
<dbReference type="OrthoDB" id="2139957at2759"/>
<dbReference type="PhylomeDB" id="A0PJR5"/>
<dbReference type="PRO" id="PR:A0PJR5"/>
<dbReference type="Proteomes" id="UP000000437">
    <property type="component" value="Chromosome 4"/>
</dbReference>
<dbReference type="GO" id="GO:0005739">
    <property type="term" value="C:mitochondrion"/>
    <property type="evidence" value="ECO:0000318"/>
    <property type="project" value="GO_Central"/>
</dbReference>
<dbReference type="GO" id="GO:0016836">
    <property type="term" value="F:hydro-lyase activity"/>
    <property type="evidence" value="ECO:0000318"/>
    <property type="project" value="GO_Central"/>
</dbReference>
<dbReference type="GO" id="GO:0006631">
    <property type="term" value="P:fatty acid metabolic process"/>
    <property type="evidence" value="ECO:0007669"/>
    <property type="project" value="UniProtKB-KW"/>
</dbReference>
<dbReference type="CDD" id="cd06558">
    <property type="entry name" value="crotonase-like"/>
    <property type="match status" value="1"/>
</dbReference>
<dbReference type="Gene3D" id="3.90.226.10">
    <property type="entry name" value="2-enoyl-CoA Hydratase, Chain A, domain 1"/>
    <property type="match status" value="1"/>
</dbReference>
<dbReference type="Gene3D" id="1.10.12.10">
    <property type="entry name" value="Lyase 2-enoyl-coa Hydratase, Chain A, domain 2"/>
    <property type="match status" value="1"/>
</dbReference>
<dbReference type="InterPro" id="IPR029045">
    <property type="entry name" value="ClpP/crotonase-like_dom_sf"/>
</dbReference>
<dbReference type="InterPro" id="IPR001753">
    <property type="entry name" value="Enoyl-CoA_hydra/iso"/>
</dbReference>
<dbReference type="InterPro" id="IPR014748">
    <property type="entry name" value="Enoyl-CoA_hydra_C"/>
</dbReference>
<dbReference type="InterPro" id="IPR052377">
    <property type="entry name" value="Mitochondrial_ECH-domain"/>
</dbReference>
<dbReference type="NCBIfam" id="NF006008">
    <property type="entry name" value="PRK08139.1"/>
    <property type="match status" value="1"/>
</dbReference>
<dbReference type="PANTHER" id="PTHR43602">
    <property type="match status" value="1"/>
</dbReference>
<dbReference type="PANTHER" id="PTHR43602:SF1">
    <property type="entry name" value="ENOYL-COA HYDRATASE DOMAIN-CONTAINING PROTEIN 3, MITOCHONDRIAL"/>
    <property type="match status" value="1"/>
</dbReference>
<dbReference type="Pfam" id="PF00378">
    <property type="entry name" value="ECH_1"/>
    <property type="match status" value="1"/>
</dbReference>
<dbReference type="SUPFAM" id="SSF52096">
    <property type="entry name" value="ClpP/crotonase"/>
    <property type="match status" value="1"/>
</dbReference>
<comment type="function">
    <text evidence="1">May play a role in fatty acid biosynthesis and insulin sensitivity.</text>
</comment>
<comment type="subcellular location">
    <subcellularLocation>
        <location evidence="3">Mitochondrion</location>
    </subcellularLocation>
</comment>
<comment type="similarity">
    <text evidence="3">Belongs to the enoyl-CoA hydratase/isomerase family.</text>
</comment>
<comment type="sequence caution" evidence="3">
    <conflict type="erroneous initiation">
        <sequence resource="EMBL-CDS" id="AAI27584"/>
    </conflict>
</comment>
<accession>A0PJR5</accession>
<feature type="transit peptide" description="Mitochondrion" evidence="2">
    <location>
        <begin position="1"/>
        <end position="14"/>
    </location>
</feature>
<feature type="chain" id="PRO_0000333218" description="Enoyl-CoA hydratase domain-containing protein 3, mitochondrial">
    <location>
        <begin position="15"/>
        <end position="289"/>
    </location>
</feature>